<name>NIPA2_ARATH</name>
<keyword id="KW-1003">Cell membrane</keyword>
<keyword id="KW-0967">Endosome</keyword>
<keyword id="KW-0406">Ion transport</keyword>
<keyword id="KW-0460">Magnesium</keyword>
<keyword id="KW-0472">Membrane</keyword>
<keyword id="KW-1185">Reference proteome</keyword>
<keyword id="KW-0812">Transmembrane</keyword>
<keyword id="KW-1133">Transmembrane helix</keyword>
<keyword id="KW-0813">Transport</keyword>
<comment type="function">
    <text evidence="1">Acts as a Mg(2+) transporter. Can also transport other divalent cations such as Fe(2+), Sr(2+), Ba(2+), Mn(2+) and Co(2+) but to a much less extent than Mg(2+) (By similarity).</text>
</comment>
<comment type="subunit">
    <text evidence="1">Homodimer.</text>
</comment>
<comment type="subcellular location">
    <subcellularLocation>
        <location evidence="1">Cell membrane</location>
        <topology evidence="1">Multi-pass membrane protein</topology>
    </subcellularLocation>
    <subcellularLocation>
        <location evidence="1">Early endosome</location>
    </subcellularLocation>
    <text evidence="1">Recruited to the cell membrane in response to low extracellular magnesium.</text>
</comment>
<comment type="similarity">
    <text evidence="4">Belongs to the NIPA (TC 2.A.7) family.</text>
</comment>
<comment type="sequence caution" evidence="4">
    <conflict type="erroneous gene model prediction">
        <sequence resource="EMBL-CDS" id="CAB36844"/>
    </conflict>
</comment>
<comment type="sequence caution" evidence="4">
    <conflict type="erroneous gene model prediction">
        <sequence resource="EMBL-CDS" id="CAB78422"/>
    </conflict>
</comment>
<organism>
    <name type="scientific">Arabidopsis thaliana</name>
    <name type="common">Mouse-ear cress</name>
    <dbReference type="NCBI Taxonomy" id="3702"/>
    <lineage>
        <taxon>Eukaryota</taxon>
        <taxon>Viridiplantae</taxon>
        <taxon>Streptophyta</taxon>
        <taxon>Embryophyta</taxon>
        <taxon>Tracheophyta</taxon>
        <taxon>Spermatophyta</taxon>
        <taxon>Magnoliopsida</taxon>
        <taxon>eudicotyledons</taxon>
        <taxon>Gunneridae</taxon>
        <taxon>Pentapetalae</taxon>
        <taxon>rosids</taxon>
        <taxon>malvids</taxon>
        <taxon>Brassicales</taxon>
        <taxon>Brassicaceae</taxon>
        <taxon>Camelineae</taxon>
        <taxon>Arabidopsis</taxon>
    </lineage>
</organism>
<dbReference type="EMBL" id="AL035528">
    <property type="protein sequence ID" value="CAB36844.1"/>
    <property type="status" value="ALT_SEQ"/>
    <property type="molecule type" value="Genomic_DNA"/>
</dbReference>
<dbReference type="EMBL" id="AL161537">
    <property type="protein sequence ID" value="CAB78422.1"/>
    <property type="status" value="ALT_SEQ"/>
    <property type="molecule type" value="Genomic_DNA"/>
</dbReference>
<dbReference type="EMBL" id="CP002687">
    <property type="protein sequence ID" value="AEE83326.1"/>
    <property type="molecule type" value="Genomic_DNA"/>
</dbReference>
<dbReference type="EMBL" id="CP002687">
    <property type="protein sequence ID" value="ANM66023.1"/>
    <property type="molecule type" value="Genomic_DNA"/>
</dbReference>
<dbReference type="EMBL" id="CP002687">
    <property type="protein sequence ID" value="ANM66025.1"/>
    <property type="molecule type" value="Genomic_DNA"/>
</dbReference>
<dbReference type="EMBL" id="CP002687">
    <property type="protein sequence ID" value="ANM66026.1"/>
    <property type="molecule type" value="Genomic_DNA"/>
</dbReference>
<dbReference type="EMBL" id="BT033091">
    <property type="protein sequence ID" value="ACF04814.1"/>
    <property type="molecule type" value="mRNA"/>
</dbReference>
<dbReference type="EMBL" id="AY088039">
    <property type="protein sequence ID" value="AAM65585.1"/>
    <property type="molecule type" value="mRNA"/>
</dbReference>
<dbReference type="PIR" id="T05249">
    <property type="entry name" value="T05249"/>
</dbReference>
<dbReference type="RefSeq" id="NP_001319923.1">
    <property type="nucleotide sequence ID" value="NM_001340877.1"/>
</dbReference>
<dbReference type="RefSeq" id="NP_001327951.1">
    <property type="nucleotide sequence ID" value="NM_001340884.1"/>
</dbReference>
<dbReference type="RefSeq" id="NP_001327952.1">
    <property type="nucleotide sequence ID" value="NM_001340881.1"/>
</dbReference>
<dbReference type="RefSeq" id="NP_567411.1">
    <property type="nucleotide sequence ID" value="NM_117454.2"/>
</dbReference>
<dbReference type="FunCoup" id="B3LFA3">
    <property type="interactions" value="3146"/>
</dbReference>
<dbReference type="STRING" id="3702.B3LFA3"/>
<dbReference type="iPTMnet" id="B3LFA3"/>
<dbReference type="PaxDb" id="3702-AT4G13800.1"/>
<dbReference type="ProteomicsDB" id="249439"/>
<dbReference type="EnsemblPlants" id="AT4G13800.1">
    <property type="protein sequence ID" value="AT4G13800.1"/>
    <property type="gene ID" value="AT4G13800"/>
</dbReference>
<dbReference type="EnsemblPlants" id="AT4G13800.10">
    <property type="protein sequence ID" value="AT4G13800.10"/>
    <property type="gene ID" value="AT4G13800"/>
</dbReference>
<dbReference type="EnsemblPlants" id="AT4G13800.5">
    <property type="protein sequence ID" value="AT4G13800.5"/>
    <property type="gene ID" value="AT4G13800"/>
</dbReference>
<dbReference type="EnsemblPlants" id="AT4G13800.8">
    <property type="protein sequence ID" value="AT4G13800.8"/>
    <property type="gene ID" value="AT4G13800"/>
</dbReference>
<dbReference type="GeneID" id="827014"/>
<dbReference type="Gramene" id="AT4G13800.1">
    <property type="protein sequence ID" value="AT4G13800.1"/>
    <property type="gene ID" value="AT4G13800"/>
</dbReference>
<dbReference type="Gramene" id="AT4G13800.10">
    <property type="protein sequence ID" value="AT4G13800.10"/>
    <property type="gene ID" value="AT4G13800"/>
</dbReference>
<dbReference type="Gramene" id="AT4G13800.5">
    <property type="protein sequence ID" value="AT4G13800.5"/>
    <property type="gene ID" value="AT4G13800"/>
</dbReference>
<dbReference type="Gramene" id="AT4G13800.8">
    <property type="protein sequence ID" value="AT4G13800.8"/>
    <property type="gene ID" value="AT4G13800"/>
</dbReference>
<dbReference type="KEGG" id="ath:AT4G13800"/>
<dbReference type="Araport" id="AT4G13800"/>
<dbReference type="TAIR" id="AT4G13800">
    <property type="gene designation" value="ENOR3L3"/>
</dbReference>
<dbReference type="eggNOG" id="KOG2922">
    <property type="taxonomic scope" value="Eukaryota"/>
</dbReference>
<dbReference type="HOGENOM" id="CLU_012349_1_1_1"/>
<dbReference type="InParanoid" id="B3LFA3"/>
<dbReference type="OMA" id="MGAGEVC"/>
<dbReference type="PhylomeDB" id="B3LFA3"/>
<dbReference type="PRO" id="PR:B3LFA3"/>
<dbReference type="Proteomes" id="UP000006548">
    <property type="component" value="Chromosome 4"/>
</dbReference>
<dbReference type="ExpressionAtlas" id="B3LFA3">
    <property type="expression patterns" value="baseline and differential"/>
</dbReference>
<dbReference type="GO" id="GO:0005769">
    <property type="term" value="C:early endosome"/>
    <property type="evidence" value="ECO:0000250"/>
    <property type="project" value="UniProtKB"/>
</dbReference>
<dbReference type="GO" id="GO:0005886">
    <property type="term" value="C:plasma membrane"/>
    <property type="evidence" value="ECO:0007005"/>
    <property type="project" value="TAIR"/>
</dbReference>
<dbReference type="GO" id="GO:0015095">
    <property type="term" value="F:magnesium ion transmembrane transporter activity"/>
    <property type="evidence" value="ECO:0007669"/>
    <property type="project" value="InterPro"/>
</dbReference>
<dbReference type="GO" id="GO:0015693">
    <property type="term" value="P:magnesium ion transport"/>
    <property type="evidence" value="ECO:0000250"/>
    <property type="project" value="UniProtKB"/>
</dbReference>
<dbReference type="InterPro" id="IPR008521">
    <property type="entry name" value="Mg_trans_NIPA"/>
</dbReference>
<dbReference type="PANTHER" id="PTHR12570">
    <property type="match status" value="1"/>
</dbReference>
<dbReference type="PANTHER" id="PTHR12570:SF67">
    <property type="entry name" value="MAGNESIUM TRANSPORTER NIPA2-RELATED"/>
    <property type="match status" value="1"/>
</dbReference>
<dbReference type="Pfam" id="PF05653">
    <property type="entry name" value="Mg_trans_NIPA"/>
    <property type="match status" value="1"/>
</dbReference>
<dbReference type="SUPFAM" id="SSF103481">
    <property type="entry name" value="Multidrug resistance efflux transporter EmrE"/>
    <property type="match status" value="1"/>
</dbReference>
<evidence type="ECO:0000250" key="1"/>
<evidence type="ECO:0000255" key="2"/>
<evidence type="ECO:0000256" key="3">
    <source>
        <dbReference type="SAM" id="MobiDB-lite"/>
    </source>
</evidence>
<evidence type="ECO:0000305" key="4"/>
<reference key="1">
    <citation type="journal article" date="1999" name="Nature">
        <title>Sequence and analysis of chromosome 4 of the plant Arabidopsis thaliana.</title>
        <authorList>
            <person name="Mayer K.F.X."/>
            <person name="Schueller C."/>
            <person name="Wambutt R."/>
            <person name="Murphy G."/>
            <person name="Volckaert G."/>
            <person name="Pohl T."/>
            <person name="Duesterhoeft A."/>
            <person name="Stiekema W."/>
            <person name="Entian K.-D."/>
            <person name="Terryn N."/>
            <person name="Harris B."/>
            <person name="Ansorge W."/>
            <person name="Brandt P."/>
            <person name="Grivell L.A."/>
            <person name="Rieger M."/>
            <person name="Weichselgartner M."/>
            <person name="de Simone V."/>
            <person name="Obermaier B."/>
            <person name="Mache R."/>
            <person name="Mueller M."/>
            <person name="Kreis M."/>
            <person name="Delseny M."/>
            <person name="Puigdomenech P."/>
            <person name="Watson M."/>
            <person name="Schmidtheini T."/>
            <person name="Reichert B."/>
            <person name="Portetelle D."/>
            <person name="Perez-Alonso M."/>
            <person name="Boutry M."/>
            <person name="Bancroft I."/>
            <person name="Vos P."/>
            <person name="Hoheisel J."/>
            <person name="Zimmermann W."/>
            <person name="Wedler H."/>
            <person name="Ridley P."/>
            <person name="Langham S.-A."/>
            <person name="McCullagh B."/>
            <person name="Bilham L."/>
            <person name="Robben J."/>
            <person name="van der Schueren J."/>
            <person name="Grymonprez B."/>
            <person name="Chuang Y.-J."/>
            <person name="Vandenbussche F."/>
            <person name="Braeken M."/>
            <person name="Weltjens I."/>
            <person name="Voet M."/>
            <person name="Bastiaens I."/>
            <person name="Aert R."/>
            <person name="Defoor E."/>
            <person name="Weitzenegger T."/>
            <person name="Bothe G."/>
            <person name="Ramsperger U."/>
            <person name="Hilbert H."/>
            <person name="Braun M."/>
            <person name="Holzer E."/>
            <person name="Brandt A."/>
            <person name="Peters S."/>
            <person name="van Staveren M."/>
            <person name="Dirkse W."/>
            <person name="Mooijman P."/>
            <person name="Klein Lankhorst R."/>
            <person name="Rose M."/>
            <person name="Hauf J."/>
            <person name="Koetter P."/>
            <person name="Berneiser S."/>
            <person name="Hempel S."/>
            <person name="Feldpausch M."/>
            <person name="Lamberth S."/>
            <person name="Van den Daele H."/>
            <person name="De Keyser A."/>
            <person name="Buysshaert C."/>
            <person name="Gielen J."/>
            <person name="Villarroel R."/>
            <person name="De Clercq R."/>
            <person name="van Montagu M."/>
            <person name="Rogers J."/>
            <person name="Cronin A."/>
            <person name="Quail M.A."/>
            <person name="Bray-Allen S."/>
            <person name="Clark L."/>
            <person name="Doggett J."/>
            <person name="Hall S."/>
            <person name="Kay M."/>
            <person name="Lennard N."/>
            <person name="McLay K."/>
            <person name="Mayes R."/>
            <person name="Pettett A."/>
            <person name="Rajandream M.A."/>
            <person name="Lyne M."/>
            <person name="Benes V."/>
            <person name="Rechmann S."/>
            <person name="Borkova D."/>
            <person name="Bloecker H."/>
            <person name="Scharfe M."/>
            <person name="Grimm M."/>
            <person name="Loehnert T.-H."/>
            <person name="Dose S."/>
            <person name="de Haan M."/>
            <person name="Maarse A.C."/>
            <person name="Schaefer M."/>
            <person name="Mueller-Auer S."/>
            <person name="Gabel C."/>
            <person name="Fuchs M."/>
            <person name="Fartmann B."/>
            <person name="Granderath K."/>
            <person name="Dauner D."/>
            <person name="Herzl A."/>
            <person name="Neumann S."/>
            <person name="Argiriou A."/>
            <person name="Vitale D."/>
            <person name="Liguori R."/>
            <person name="Piravandi E."/>
            <person name="Massenet O."/>
            <person name="Quigley F."/>
            <person name="Clabauld G."/>
            <person name="Muendlein A."/>
            <person name="Felber R."/>
            <person name="Schnabl S."/>
            <person name="Hiller R."/>
            <person name="Schmidt W."/>
            <person name="Lecharny A."/>
            <person name="Aubourg S."/>
            <person name="Chefdor F."/>
            <person name="Cooke R."/>
            <person name="Berger C."/>
            <person name="Monfort A."/>
            <person name="Casacuberta E."/>
            <person name="Gibbons T."/>
            <person name="Weber N."/>
            <person name="Vandenbol M."/>
            <person name="Bargues M."/>
            <person name="Terol J."/>
            <person name="Torres A."/>
            <person name="Perez-Perez A."/>
            <person name="Purnelle B."/>
            <person name="Bent E."/>
            <person name="Johnson S."/>
            <person name="Tacon D."/>
            <person name="Jesse T."/>
            <person name="Heijnen L."/>
            <person name="Schwarz S."/>
            <person name="Scholler P."/>
            <person name="Heber S."/>
            <person name="Francs P."/>
            <person name="Bielke C."/>
            <person name="Frishman D."/>
            <person name="Haase D."/>
            <person name="Lemcke K."/>
            <person name="Mewes H.-W."/>
            <person name="Stocker S."/>
            <person name="Zaccaria P."/>
            <person name="Bevan M."/>
            <person name="Wilson R.K."/>
            <person name="de la Bastide M."/>
            <person name="Habermann K."/>
            <person name="Parnell L."/>
            <person name="Dedhia N."/>
            <person name="Gnoj L."/>
            <person name="Schutz K."/>
            <person name="Huang E."/>
            <person name="Spiegel L."/>
            <person name="Sekhon M."/>
            <person name="Murray J."/>
            <person name="Sheet P."/>
            <person name="Cordes M."/>
            <person name="Abu-Threideh J."/>
            <person name="Stoneking T."/>
            <person name="Kalicki J."/>
            <person name="Graves T."/>
            <person name="Harmon G."/>
            <person name="Edwards J."/>
            <person name="Latreille P."/>
            <person name="Courtney L."/>
            <person name="Cloud J."/>
            <person name="Abbott A."/>
            <person name="Scott K."/>
            <person name="Johnson D."/>
            <person name="Minx P."/>
            <person name="Bentley D."/>
            <person name="Fulton B."/>
            <person name="Miller N."/>
            <person name="Greco T."/>
            <person name="Kemp K."/>
            <person name="Kramer J."/>
            <person name="Fulton L."/>
            <person name="Mardis E."/>
            <person name="Dante M."/>
            <person name="Pepin K."/>
            <person name="Hillier L.W."/>
            <person name="Nelson J."/>
            <person name="Spieth J."/>
            <person name="Ryan E."/>
            <person name="Andrews S."/>
            <person name="Geisel C."/>
            <person name="Layman D."/>
            <person name="Du H."/>
            <person name="Ali J."/>
            <person name="Berghoff A."/>
            <person name="Jones K."/>
            <person name="Drone K."/>
            <person name="Cotton M."/>
            <person name="Joshu C."/>
            <person name="Antonoiu B."/>
            <person name="Zidanic M."/>
            <person name="Strong C."/>
            <person name="Sun H."/>
            <person name="Lamar B."/>
            <person name="Yordan C."/>
            <person name="Ma P."/>
            <person name="Zhong J."/>
            <person name="Preston R."/>
            <person name="Vil D."/>
            <person name="Shekher M."/>
            <person name="Matero A."/>
            <person name="Shah R."/>
            <person name="Swaby I.K."/>
            <person name="O'Shaughnessy A."/>
            <person name="Rodriguez M."/>
            <person name="Hoffman J."/>
            <person name="Till S."/>
            <person name="Granat S."/>
            <person name="Shohdy N."/>
            <person name="Hasegawa A."/>
            <person name="Hameed A."/>
            <person name="Lodhi M."/>
            <person name="Johnson A."/>
            <person name="Chen E."/>
            <person name="Marra M.A."/>
            <person name="Martienssen R."/>
            <person name="McCombie W.R."/>
        </authorList>
    </citation>
    <scope>NUCLEOTIDE SEQUENCE [LARGE SCALE GENOMIC DNA]</scope>
    <source>
        <strain>cv. Columbia</strain>
    </source>
</reference>
<reference key="2">
    <citation type="journal article" date="2017" name="Plant J.">
        <title>Araport11: a complete reannotation of the Arabidopsis thaliana reference genome.</title>
        <authorList>
            <person name="Cheng C.Y."/>
            <person name="Krishnakumar V."/>
            <person name="Chan A.P."/>
            <person name="Thibaud-Nissen F."/>
            <person name="Schobel S."/>
            <person name="Town C.D."/>
        </authorList>
    </citation>
    <scope>GENOME REANNOTATION</scope>
    <source>
        <strain>cv. Columbia</strain>
    </source>
</reference>
<reference key="3">
    <citation type="submission" date="2008-06" db="EMBL/GenBank/DDBJ databases">
        <title>Arabidopsis ORF clones.</title>
        <authorList>
            <person name="de los Reyes C."/>
            <person name="Quan R."/>
            <person name="Chen H."/>
            <person name="Bautista V."/>
            <person name="Kim C.J."/>
            <person name="Ecker J.R."/>
        </authorList>
    </citation>
    <scope>NUCLEOTIDE SEQUENCE [LARGE SCALE MRNA]</scope>
    <source>
        <strain>cv. Columbia</strain>
    </source>
</reference>
<reference key="4">
    <citation type="submission" date="2002-03" db="EMBL/GenBank/DDBJ databases">
        <title>Full-length cDNA from Arabidopsis thaliana.</title>
        <authorList>
            <person name="Brover V.V."/>
            <person name="Troukhan M.E."/>
            <person name="Alexandrov N.A."/>
            <person name="Lu Y.-P."/>
            <person name="Flavell R.B."/>
            <person name="Feldmann K.A."/>
        </authorList>
    </citation>
    <scope>NUCLEOTIDE SEQUENCE [LARGE SCALE MRNA] OF 4-336</scope>
</reference>
<protein>
    <recommendedName>
        <fullName>Probable magnesium transporter NIPA2</fullName>
    </recommendedName>
</protein>
<sequence length="336" mass="36600">MEEMSPDNIHGVILAVSSSIFIGSSFIIKKKGLKKAGVSGARAGEGGYGYLYEPWWWAGMITMIVGEIANFAAYAFAPAILVTPLGALSIIFSAVLAHFILEEKLHMFGILGCVLCVVGSTTIVLHAPHEQGIESVKQVWHLATEPGFLAYSAVVLVVVLALIFYYEPRYGKTHMIVYVGICSLMGSLTVMSVKAVAIAIKLTFSGMNQFKYFHAWIFIIVVTICCILQINYLNKALDNFNTAVISPVYYVMFTTFTILASMIMFKDWASQSGLQIATELCGFVTILSGTFLLHKTKDMGNSTSLRGSTSHSPRDTPVFINSGSSRSSNSTRPAIL</sequence>
<feature type="chain" id="PRO_0000430290" description="Probable magnesium transporter NIPA2">
    <location>
        <begin position="1"/>
        <end position="336"/>
    </location>
</feature>
<feature type="topological domain" description="Extracellular" evidence="2">
    <location>
        <begin position="1"/>
        <end position="7"/>
    </location>
</feature>
<feature type="transmembrane region" description="Helical; Name=1" evidence="2">
    <location>
        <begin position="8"/>
        <end position="28"/>
    </location>
</feature>
<feature type="topological domain" description="Cytoplasmic" evidence="2">
    <location>
        <begin position="29"/>
        <end position="55"/>
    </location>
</feature>
<feature type="transmembrane region" description="Helical; Name=2" evidence="2">
    <location>
        <begin position="56"/>
        <end position="76"/>
    </location>
</feature>
<feature type="topological domain" description="Extracellular" evidence="2">
    <location>
        <begin position="77"/>
        <end position="79"/>
    </location>
</feature>
<feature type="transmembrane region" description="Helical; Name=3" evidence="2">
    <location>
        <begin position="80"/>
        <end position="100"/>
    </location>
</feature>
<feature type="topological domain" description="Cytoplasmic" evidence="2">
    <location>
        <begin position="101"/>
        <end position="104"/>
    </location>
</feature>
<feature type="transmembrane region" description="Helical; Name=4" evidence="2">
    <location>
        <begin position="105"/>
        <end position="125"/>
    </location>
</feature>
<feature type="topological domain" description="Extracellular" evidence="2">
    <location>
        <begin position="126"/>
        <end position="145"/>
    </location>
</feature>
<feature type="transmembrane region" description="Helical; Name=5" evidence="2">
    <location>
        <begin position="146"/>
        <end position="166"/>
    </location>
</feature>
<feature type="topological domain" description="Cytoplasmic" evidence="2">
    <location>
        <begin position="167"/>
        <end position="179"/>
    </location>
</feature>
<feature type="transmembrane region" description="Helical; Name=6" evidence="2">
    <location>
        <begin position="180"/>
        <end position="200"/>
    </location>
</feature>
<feature type="topological domain" description="Extracellular" evidence="2">
    <location>
        <begin position="201"/>
        <end position="212"/>
    </location>
</feature>
<feature type="transmembrane region" description="Helical; Name=7" evidence="2">
    <location>
        <begin position="213"/>
        <end position="233"/>
    </location>
</feature>
<feature type="topological domain" description="Cytoplasmic" evidence="2">
    <location>
        <begin position="234"/>
        <end position="244"/>
    </location>
</feature>
<feature type="transmembrane region" description="Helical; Name=8" evidence="2">
    <location>
        <begin position="245"/>
        <end position="265"/>
    </location>
</feature>
<feature type="topological domain" description="Extracellular" evidence="2">
    <location>
        <begin position="266"/>
        <end position="272"/>
    </location>
</feature>
<feature type="transmembrane region" description="Helical; Name=9" evidence="2">
    <location>
        <begin position="273"/>
        <end position="293"/>
    </location>
</feature>
<feature type="topological domain" description="Cytoplasmic" evidence="2">
    <location>
        <begin position="294"/>
        <end position="336"/>
    </location>
</feature>
<feature type="region of interest" description="Disordered" evidence="3">
    <location>
        <begin position="303"/>
        <end position="336"/>
    </location>
</feature>
<feature type="compositionally biased region" description="Low complexity" evidence="3">
    <location>
        <begin position="321"/>
        <end position="330"/>
    </location>
</feature>
<feature type="sequence conflict" description="In Ref. 4; AAM65585." evidence="4" ref="4">
    <original>N</original>
    <variation>H</variation>
    <location>
        <position position="329"/>
    </location>
</feature>
<accession>B3LFA3</accession>
<accession>Q8LA45</accession>
<accession>Q9SVN3</accession>
<proteinExistence type="evidence at transcript level"/>
<gene>
    <name type="ordered locus">At4g13800</name>
    <name type="ORF">F18A5.190</name>
</gene>